<feature type="chain" id="PRO_1000059942" description="Imidazolonepropionase">
    <location>
        <begin position="1"/>
        <end position="422"/>
    </location>
</feature>
<feature type="binding site" evidence="1">
    <location>
        <position position="82"/>
    </location>
    <ligand>
        <name>Fe(3+)</name>
        <dbReference type="ChEBI" id="CHEBI:29034"/>
    </ligand>
</feature>
<feature type="binding site" evidence="1">
    <location>
        <position position="82"/>
    </location>
    <ligand>
        <name>Zn(2+)</name>
        <dbReference type="ChEBI" id="CHEBI:29105"/>
    </ligand>
</feature>
<feature type="binding site" evidence="1">
    <location>
        <position position="84"/>
    </location>
    <ligand>
        <name>Fe(3+)</name>
        <dbReference type="ChEBI" id="CHEBI:29034"/>
    </ligand>
</feature>
<feature type="binding site" evidence="1">
    <location>
        <position position="84"/>
    </location>
    <ligand>
        <name>Zn(2+)</name>
        <dbReference type="ChEBI" id="CHEBI:29105"/>
    </ligand>
</feature>
<feature type="binding site" evidence="1">
    <location>
        <position position="91"/>
    </location>
    <ligand>
        <name>4-imidazolone-5-propanoate</name>
        <dbReference type="ChEBI" id="CHEBI:77893"/>
    </ligand>
</feature>
<feature type="binding site" evidence="1">
    <location>
        <position position="154"/>
    </location>
    <ligand>
        <name>4-imidazolone-5-propanoate</name>
        <dbReference type="ChEBI" id="CHEBI:77893"/>
    </ligand>
</feature>
<feature type="binding site" evidence="1">
    <location>
        <position position="154"/>
    </location>
    <ligand>
        <name>N-formimidoyl-L-glutamate</name>
        <dbReference type="ChEBI" id="CHEBI:58928"/>
    </ligand>
</feature>
<feature type="binding site" evidence="1">
    <location>
        <position position="187"/>
    </location>
    <ligand>
        <name>4-imidazolone-5-propanoate</name>
        <dbReference type="ChEBI" id="CHEBI:77893"/>
    </ligand>
</feature>
<feature type="binding site" evidence="1">
    <location>
        <position position="252"/>
    </location>
    <ligand>
        <name>Fe(3+)</name>
        <dbReference type="ChEBI" id="CHEBI:29034"/>
    </ligand>
</feature>
<feature type="binding site" evidence="1">
    <location>
        <position position="252"/>
    </location>
    <ligand>
        <name>Zn(2+)</name>
        <dbReference type="ChEBI" id="CHEBI:29105"/>
    </ligand>
</feature>
<feature type="binding site" evidence="1">
    <location>
        <position position="255"/>
    </location>
    <ligand>
        <name>4-imidazolone-5-propanoate</name>
        <dbReference type="ChEBI" id="CHEBI:77893"/>
    </ligand>
</feature>
<feature type="binding site" evidence="1">
    <location>
        <position position="327"/>
    </location>
    <ligand>
        <name>Fe(3+)</name>
        <dbReference type="ChEBI" id="CHEBI:29034"/>
    </ligand>
</feature>
<feature type="binding site" evidence="1">
    <location>
        <position position="327"/>
    </location>
    <ligand>
        <name>Zn(2+)</name>
        <dbReference type="ChEBI" id="CHEBI:29105"/>
    </ligand>
</feature>
<feature type="binding site" evidence="1">
    <location>
        <position position="329"/>
    </location>
    <ligand>
        <name>N-formimidoyl-L-glutamate</name>
        <dbReference type="ChEBI" id="CHEBI:58928"/>
    </ligand>
</feature>
<feature type="binding site" evidence="1">
    <location>
        <position position="331"/>
    </location>
    <ligand>
        <name>N-formimidoyl-L-glutamate</name>
        <dbReference type="ChEBI" id="CHEBI:58928"/>
    </ligand>
</feature>
<feature type="binding site" evidence="1">
    <location>
        <position position="332"/>
    </location>
    <ligand>
        <name>4-imidazolone-5-propanoate</name>
        <dbReference type="ChEBI" id="CHEBI:77893"/>
    </ligand>
</feature>
<protein>
    <recommendedName>
        <fullName evidence="1">Imidazolonepropionase</fullName>
        <ecNumber evidence="1">3.5.2.7</ecNumber>
    </recommendedName>
    <alternativeName>
        <fullName evidence="1">Imidazolone-5-propionate hydrolase</fullName>
    </alternativeName>
</protein>
<name>HUTI_ALKOO</name>
<keyword id="KW-0963">Cytoplasm</keyword>
<keyword id="KW-0369">Histidine metabolism</keyword>
<keyword id="KW-0378">Hydrolase</keyword>
<keyword id="KW-0408">Iron</keyword>
<keyword id="KW-0479">Metal-binding</keyword>
<keyword id="KW-1185">Reference proteome</keyword>
<keyword id="KW-0862">Zinc</keyword>
<gene>
    <name evidence="1" type="primary">hutI</name>
    <name type="ordered locus">Clos_1188</name>
</gene>
<proteinExistence type="inferred from homology"/>
<evidence type="ECO:0000255" key="1">
    <source>
        <dbReference type="HAMAP-Rule" id="MF_00372"/>
    </source>
</evidence>
<accession>A8MF65</accession>
<organism>
    <name type="scientific">Alkaliphilus oremlandii (strain OhILAs)</name>
    <name type="common">Clostridium oremlandii (strain OhILAs)</name>
    <dbReference type="NCBI Taxonomy" id="350688"/>
    <lineage>
        <taxon>Bacteria</taxon>
        <taxon>Bacillati</taxon>
        <taxon>Bacillota</taxon>
        <taxon>Clostridia</taxon>
        <taxon>Peptostreptococcales</taxon>
        <taxon>Natronincolaceae</taxon>
        <taxon>Alkaliphilus</taxon>
    </lineage>
</organism>
<reference key="1">
    <citation type="submission" date="2007-10" db="EMBL/GenBank/DDBJ databases">
        <title>Complete genome of Alkaliphilus oremlandii OhILAs.</title>
        <authorList>
            <person name="Copeland A."/>
            <person name="Lucas S."/>
            <person name="Lapidus A."/>
            <person name="Barry K."/>
            <person name="Detter J.C."/>
            <person name="Glavina del Rio T."/>
            <person name="Hammon N."/>
            <person name="Israni S."/>
            <person name="Dalin E."/>
            <person name="Tice H."/>
            <person name="Pitluck S."/>
            <person name="Chain P."/>
            <person name="Malfatti S."/>
            <person name="Shin M."/>
            <person name="Vergez L."/>
            <person name="Schmutz J."/>
            <person name="Larimer F."/>
            <person name="Land M."/>
            <person name="Hauser L."/>
            <person name="Kyrpides N."/>
            <person name="Mikhailova N."/>
            <person name="Stolz J.F."/>
            <person name="Dawson A."/>
            <person name="Fisher E."/>
            <person name="Crable B."/>
            <person name="Perera E."/>
            <person name="Lisak J."/>
            <person name="Ranganathan M."/>
            <person name="Basu P."/>
            <person name="Richardson P."/>
        </authorList>
    </citation>
    <scope>NUCLEOTIDE SEQUENCE [LARGE SCALE GENOMIC DNA]</scope>
    <source>
        <strain>OhILAs</strain>
    </source>
</reference>
<dbReference type="EC" id="3.5.2.7" evidence="1"/>
<dbReference type="EMBL" id="CP000853">
    <property type="protein sequence ID" value="ABW18734.1"/>
    <property type="molecule type" value="Genomic_DNA"/>
</dbReference>
<dbReference type="RefSeq" id="WP_012159046.1">
    <property type="nucleotide sequence ID" value="NC_009922.1"/>
</dbReference>
<dbReference type="SMR" id="A8MF65"/>
<dbReference type="STRING" id="350688.Clos_1188"/>
<dbReference type="KEGG" id="aoe:Clos_1188"/>
<dbReference type="eggNOG" id="COG1228">
    <property type="taxonomic scope" value="Bacteria"/>
</dbReference>
<dbReference type="HOGENOM" id="CLU_041647_0_1_9"/>
<dbReference type="OrthoDB" id="9776455at2"/>
<dbReference type="UniPathway" id="UPA00379">
    <property type="reaction ID" value="UER00551"/>
</dbReference>
<dbReference type="Proteomes" id="UP000000269">
    <property type="component" value="Chromosome"/>
</dbReference>
<dbReference type="GO" id="GO:0005737">
    <property type="term" value="C:cytoplasm"/>
    <property type="evidence" value="ECO:0007669"/>
    <property type="project" value="UniProtKB-SubCell"/>
</dbReference>
<dbReference type="GO" id="GO:0050480">
    <property type="term" value="F:imidazolonepropionase activity"/>
    <property type="evidence" value="ECO:0007669"/>
    <property type="project" value="UniProtKB-UniRule"/>
</dbReference>
<dbReference type="GO" id="GO:0005506">
    <property type="term" value="F:iron ion binding"/>
    <property type="evidence" value="ECO:0007669"/>
    <property type="project" value="UniProtKB-UniRule"/>
</dbReference>
<dbReference type="GO" id="GO:0008270">
    <property type="term" value="F:zinc ion binding"/>
    <property type="evidence" value="ECO:0007669"/>
    <property type="project" value="UniProtKB-UniRule"/>
</dbReference>
<dbReference type="GO" id="GO:0019556">
    <property type="term" value="P:L-histidine catabolic process to glutamate and formamide"/>
    <property type="evidence" value="ECO:0007669"/>
    <property type="project" value="UniProtKB-UniPathway"/>
</dbReference>
<dbReference type="GO" id="GO:0019557">
    <property type="term" value="P:L-histidine catabolic process to glutamate and formate"/>
    <property type="evidence" value="ECO:0007669"/>
    <property type="project" value="UniProtKB-UniPathway"/>
</dbReference>
<dbReference type="CDD" id="cd01296">
    <property type="entry name" value="Imidazolone-5PH"/>
    <property type="match status" value="1"/>
</dbReference>
<dbReference type="FunFam" id="3.20.20.140:FF:000007">
    <property type="entry name" value="Imidazolonepropionase"/>
    <property type="match status" value="1"/>
</dbReference>
<dbReference type="Gene3D" id="3.20.20.140">
    <property type="entry name" value="Metal-dependent hydrolases"/>
    <property type="match status" value="1"/>
</dbReference>
<dbReference type="Gene3D" id="2.30.40.10">
    <property type="entry name" value="Urease, subunit C, domain 1"/>
    <property type="match status" value="1"/>
</dbReference>
<dbReference type="HAMAP" id="MF_00372">
    <property type="entry name" value="HutI"/>
    <property type="match status" value="1"/>
</dbReference>
<dbReference type="InterPro" id="IPR006680">
    <property type="entry name" value="Amidohydro-rel"/>
</dbReference>
<dbReference type="InterPro" id="IPR005920">
    <property type="entry name" value="HutI"/>
</dbReference>
<dbReference type="InterPro" id="IPR011059">
    <property type="entry name" value="Metal-dep_hydrolase_composite"/>
</dbReference>
<dbReference type="InterPro" id="IPR032466">
    <property type="entry name" value="Metal_Hydrolase"/>
</dbReference>
<dbReference type="NCBIfam" id="TIGR01224">
    <property type="entry name" value="hutI"/>
    <property type="match status" value="1"/>
</dbReference>
<dbReference type="PANTHER" id="PTHR42752">
    <property type="entry name" value="IMIDAZOLONEPROPIONASE"/>
    <property type="match status" value="1"/>
</dbReference>
<dbReference type="PANTHER" id="PTHR42752:SF1">
    <property type="entry name" value="IMIDAZOLONEPROPIONASE-RELATED"/>
    <property type="match status" value="1"/>
</dbReference>
<dbReference type="Pfam" id="PF01979">
    <property type="entry name" value="Amidohydro_1"/>
    <property type="match status" value="1"/>
</dbReference>
<dbReference type="SUPFAM" id="SSF51338">
    <property type="entry name" value="Composite domain of metallo-dependent hydrolases"/>
    <property type="match status" value="1"/>
</dbReference>
<dbReference type="SUPFAM" id="SSF51556">
    <property type="entry name" value="Metallo-dependent hydrolases"/>
    <property type="match status" value="1"/>
</dbReference>
<sequence length="422" mass="45757">MNIDVWIKNITQLVTVQAHGKPKKGKEMQDVGIIQDGWIAVAGDRIVGIGSGEISADFQVGENTVIISGEGKTVTPGLIDPHTHLVHAGSRENELALKLKGVPYLEILKQGGGILSTVNATKKATMEELVAQSKKSLDRMLSYGVTTVEIKSGYGLELEAEIKQLEAIHRLQQQTPMDLVSTFMGAHAIPKEYKENPEEFIDLIIEEMLPAIKEKNLAEFCDVFCEEGVFSVDQTRRILEAARSLGFKNKIHADEIVPLGGAELAAELQTISAEHLMAASETGLKMMAESNVVPVALPGTSFNLATGKYADARKMIEYGLPVALATDYNPGSCPTENIQLIMSIGCLYLKMTPEEVISAVTINAAAAIDRTQEIGSIEVGKKADITIFDAPNLYYIPYHFGVNHVDTVLKSGKIVVEKGNVI</sequence>
<comment type="function">
    <text evidence="1">Catalyzes the hydrolytic cleavage of the carbon-nitrogen bond in imidazolone-5-propanoate to yield N-formimidoyl-L-glutamate. It is the third step in the universal histidine degradation pathway.</text>
</comment>
<comment type="catalytic activity">
    <reaction evidence="1">
        <text>4-imidazolone-5-propanoate + H2O = N-formimidoyl-L-glutamate</text>
        <dbReference type="Rhea" id="RHEA:23660"/>
        <dbReference type="ChEBI" id="CHEBI:15377"/>
        <dbReference type="ChEBI" id="CHEBI:58928"/>
        <dbReference type="ChEBI" id="CHEBI:77893"/>
        <dbReference type="EC" id="3.5.2.7"/>
    </reaction>
</comment>
<comment type="cofactor">
    <cofactor evidence="1">
        <name>Zn(2+)</name>
        <dbReference type="ChEBI" id="CHEBI:29105"/>
    </cofactor>
    <cofactor evidence="1">
        <name>Fe(3+)</name>
        <dbReference type="ChEBI" id="CHEBI:29034"/>
    </cofactor>
    <text evidence="1">Binds 1 zinc or iron ion per subunit.</text>
</comment>
<comment type="pathway">
    <text evidence="1">Amino-acid degradation; L-histidine degradation into L-glutamate; N-formimidoyl-L-glutamate from L-histidine: step 3/3.</text>
</comment>
<comment type="subcellular location">
    <subcellularLocation>
        <location evidence="1">Cytoplasm</location>
    </subcellularLocation>
</comment>
<comment type="similarity">
    <text evidence="1">Belongs to the metallo-dependent hydrolases superfamily. HutI family.</text>
</comment>